<name>Y669_SHESA</name>
<dbReference type="EMBL" id="CP000469">
    <property type="protein sequence ID" value="ABK46907.1"/>
    <property type="molecule type" value="Genomic_DNA"/>
</dbReference>
<dbReference type="SMR" id="A0KSY8"/>
<dbReference type="STRING" id="94122.Shewana3_0669"/>
<dbReference type="KEGG" id="shn:Shewana3_0669"/>
<dbReference type="eggNOG" id="COG1660">
    <property type="taxonomic scope" value="Bacteria"/>
</dbReference>
<dbReference type="HOGENOM" id="CLU_059558_1_1_6"/>
<dbReference type="OrthoDB" id="9784461at2"/>
<dbReference type="Proteomes" id="UP000002589">
    <property type="component" value="Chromosome"/>
</dbReference>
<dbReference type="GO" id="GO:0005524">
    <property type="term" value="F:ATP binding"/>
    <property type="evidence" value="ECO:0007669"/>
    <property type="project" value="UniProtKB-UniRule"/>
</dbReference>
<dbReference type="GO" id="GO:0005525">
    <property type="term" value="F:GTP binding"/>
    <property type="evidence" value="ECO:0007669"/>
    <property type="project" value="UniProtKB-UniRule"/>
</dbReference>
<dbReference type="HAMAP" id="MF_00636">
    <property type="entry name" value="RapZ_like"/>
    <property type="match status" value="1"/>
</dbReference>
<dbReference type="InterPro" id="IPR027417">
    <property type="entry name" value="P-loop_NTPase"/>
</dbReference>
<dbReference type="InterPro" id="IPR005337">
    <property type="entry name" value="RapZ-like"/>
</dbReference>
<dbReference type="InterPro" id="IPR053930">
    <property type="entry name" value="RapZ-like_N"/>
</dbReference>
<dbReference type="InterPro" id="IPR053931">
    <property type="entry name" value="RapZ_C"/>
</dbReference>
<dbReference type="NCBIfam" id="NF003828">
    <property type="entry name" value="PRK05416.1"/>
    <property type="match status" value="1"/>
</dbReference>
<dbReference type="PANTHER" id="PTHR30448">
    <property type="entry name" value="RNASE ADAPTER PROTEIN RAPZ"/>
    <property type="match status" value="1"/>
</dbReference>
<dbReference type="PANTHER" id="PTHR30448:SF0">
    <property type="entry name" value="RNASE ADAPTER PROTEIN RAPZ"/>
    <property type="match status" value="1"/>
</dbReference>
<dbReference type="Pfam" id="PF22740">
    <property type="entry name" value="PapZ_C"/>
    <property type="match status" value="1"/>
</dbReference>
<dbReference type="Pfam" id="PF03668">
    <property type="entry name" value="RapZ-like_N"/>
    <property type="match status" value="1"/>
</dbReference>
<dbReference type="PIRSF" id="PIRSF005052">
    <property type="entry name" value="P-loopkin"/>
    <property type="match status" value="1"/>
</dbReference>
<dbReference type="SUPFAM" id="SSF52540">
    <property type="entry name" value="P-loop containing nucleoside triphosphate hydrolases"/>
    <property type="match status" value="1"/>
</dbReference>
<keyword id="KW-0067">ATP-binding</keyword>
<keyword id="KW-0342">GTP-binding</keyword>
<keyword id="KW-0547">Nucleotide-binding</keyword>
<protein>
    <recommendedName>
        <fullName evidence="1">Nucleotide-binding protein Shewana3_0669</fullName>
    </recommendedName>
</protein>
<gene>
    <name type="ordered locus">Shewana3_0669</name>
</gene>
<proteinExistence type="inferred from homology"/>
<sequence>MKLVIVSGRSGSGKSVALRVLEDLGYYCVDNLPLPLIGSLLEQLKGSNDLVAISVDVRNLPEQDKVLVKQLASLPEGTELTSFFLNSSDKVLLKRYSETRRLHPLSKSRVSLQEAIKLEGKLLEPLSQQMDHYIDTSNLNIYELSDQVRQILLGSVDKELVINFESFGFKHGMPTEADFMFDVRFLPNPHWEPELRPLTGLDEPVAEFLNRQPLVNKFIWQIENLLETWLPHLERNNRSYLTIAIGCTGGQHRSVYVAEQLAKRFSNGKHKVNARHRELSHAKA</sequence>
<comment type="function">
    <text evidence="1">Displays ATPase and GTPase activities.</text>
</comment>
<comment type="similarity">
    <text evidence="1">Belongs to the RapZ-like family.</text>
</comment>
<reference key="1">
    <citation type="submission" date="2006-09" db="EMBL/GenBank/DDBJ databases">
        <title>Complete sequence of chromosome 1 of Shewanella sp. ANA-3.</title>
        <authorList>
            <person name="Copeland A."/>
            <person name="Lucas S."/>
            <person name="Lapidus A."/>
            <person name="Barry K."/>
            <person name="Detter J.C."/>
            <person name="Glavina del Rio T."/>
            <person name="Hammon N."/>
            <person name="Israni S."/>
            <person name="Dalin E."/>
            <person name="Tice H."/>
            <person name="Pitluck S."/>
            <person name="Chertkov O."/>
            <person name="Brettin T."/>
            <person name="Bruce D."/>
            <person name="Han C."/>
            <person name="Tapia R."/>
            <person name="Gilna P."/>
            <person name="Schmutz J."/>
            <person name="Larimer F."/>
            <person name="Land M."/>
            <person name="Hauser L."/>
            <person name="Kyrpides N."/>
            <person name="Kim E."/>
            <person name="Newman D."/>
            <person name="Salticov C."/>
            <person name="Konstantinidis K."/>
            <person name="Klappenback J."/>
            <person name="Tiedje J."/>
            <person name="Richardson P."/>
        </authorList>
    </citation>
    <scope>NUCLEOTIDE SEQUENCE [LARGE SCALE GENOMIC DNA]</scope>
    <source>
        <strain>ANA-3</strain>
    </source>
</reference>
<organism>
    <name type="scientific">Shewanella sp. (strain ANA-3)</name>
    <dbReference type="NCBI Taxonomy" id="94122"/>
    <lineage>
        <taxon>Bacteria</taxon>
        <taxon>Pseudomonadati</taxon>
        <taxon>Pseudomonadota</taxon>
        <taxon>Gammaproteobacteria</taxon>
        <taxon>Alteromonadales</taxon>
        <taxon>Shewanellaceae</taxon>
        <taxon>Shewanella</taxon>
    </lineage>
</organism>
<evidence type="ECO:0000255" key="1">
    <source>
        <dbReference type="HAMAP-Rule" id="MF_00636"/>
    </source>
</evidence>
<feature type="chain" id="PRO_1000056858" description="Nucleotide-binding protein Shewana3_0669">
    <location>
        <begin position="1"/>
        <end position="284"/>
    </location>
</feature>
<feature type="binding site" evidence="1">
    <location>
        <begin position="8"/>
        <end position="15"/>
    </location>
    <ligand>
        <name>ATP</name>
        <dbReference type="ChEBI" id="CHEBI:30616"/>
    </ligand>
</feature>
<feature type="binding site" evidence="1">
    <location>
        <begin position="56"/>
        <end position="59"/>
    </location>
    <ligand>
        <name>GTP</name>
        <dbReference type="ChEBI" id="CHEBI:37565"/>
    </ligand>
</feature>
<accession>A0KSY8</accession>